<keyword id="KW-0002">3D-structure</keyword>
<keyword id="KW-1185">Reference proteome</keyword>
<keyword id="KW-0687">Ribonucleoprotein</keyword>
<keyword id="KW-0689">Ribosomal protein</keyword>
<keyword id="KW-0694">RNA-binding</keyword>
<keyword id="KW-0699">rRNA-binding</keyword>
<dbReference type="EMBL" id="Y18930">
    <property type="protein sequence ID" value="CAB57594.1"/>
    <property type="molecule type" value="Genomic_DNA"/>
</dbReference>
<dbReference type="EMBL" id="AE006641">
    <property type="protein sequence ID" value="AAK41010.1"/>
    <property type="molecule type" value="Genomic_DNA"/>
</dbReference>
<dbReference type="PIR" id="C90219">
    <property type="entry name" value="C90219"/>
</dbReference>
<dbReference type="RefSeq" id="WP_009991272.1">
    <property type="nucleotide sequence ID" value="NC_002754.1"/>
</dbReference>
<dbReference type="PDB" id="9FHL">
    <property type="method" value="EM"/>
    <property type="resolution" value="2.50 A"/>
    <property type="chains" value="R=1-114"/>
</dbReference>
<dbReference type="PDB" id="9FRA">
    <property type="method" value="EM"/>
    <property type="resolution" value="2.80 A"/>
    <property type="chains" value="R=1-114"/>
</dbReference>
<dbReference type="PDB" id="9FRK">
    <property type="method" value="EM"/>
    <property type="resolution" value="3.00 A"/>
    <property type="chains" value="R=1-114"/>
</dbReference>
<dbReference type="PDB" id="9FRL">
    <property type="method" value="EM"/>
    <property type="resolution" value="2.97 A"/>
    <property type="chains" value="R=1-114"/>
</dbReference>
<dbReference type="PDB" id="9FS6">
    <property type="method" value="EM"/>
    <property type="resolution" value="2.90 A"/>
    <property type="chains" value="R=1-114"/>
</dbReference>
<dbReference type="PDB" id="9FS8">
    <property type="method" value="EM"/>
    <property type="resolution" value="3.70 A"/>
    <property type="chains" value="R=1-114"/>
</dbReference>
<dbReference type="PDB" id="9FSF">
    <property type="method" value="EM"/>
    <property type="resolution" value="2.80 A"/>
    <property type="chains" value="R=1-114"/>
</dbReference>
<dbReference type="PDB" id="9FY0">
    <property type="method" value="EM"/>
    <property type="resolution" value="2.90 A"/>
    <property type="chains" value="R=1-114"/>
</dbReference>
<dbReference type="PDBsum" id="9FHL"/>
<dbReference type="PDBsum" id="9FRA"/>
<dbReference type="PDBsum" id="9FRK"/>
<dbReference type="PDBsum" id="9FRL"/>
<dbReference type="PDBsum" id="9FS6"/>
<dbReference type="PDBsum" id="9FS8"/>
<dbReference type="PDBsum" id="9FSF"/>
<dbReference type="PDBsum" id="9FY0"/>
<dbReference type="EMDB" id="EMD-50445"/>
<dbReference type="EMDB" id="EMD-50709"/>
<dbReference type="EMDB" id="EMD-50716"/>
<dbReference type="EMDB" id="EMD-50717"/>
<dbReference type="EMDB" id="EMD-50724"/>
<dbReference type="EMDB" id="EMD-50725"/>
<dbReference type="EMDB" id="EMD-50727"/>
<dbReference type="EMDB" id="EMD-50854"/>
<dbReference type="SMR" id="Q9UX98"/>
<dbReference type="FunCoup" id="Q9UX98">
    <property type="interactions" value="213"/>
</dbReference>
<dbReference type="STRING" id="273057.SSO0709"/>
<dbReference type="PaxDb" id="273057-SSO0709"/>
<dbReference type="EnsemblBacteria" id="AAK41010">
    <property type="protein sequence ID" value="AAK41010"/>
    <property type="gene ID" value="SSO0709"/>
</dbReference>
<dbReference type="KEGG" id="sso:SSO0709"/>
<dbReference type="PATRIC" id="fig|273057.12.peg.709"/>
<dbReference type="eggNOG" id="arCOG04096">
    <property type="taxonomic scope" value="Archaea"/>
</dbReference>
<dbReference type="HOGENOM" id="CLU_073626_0_3_2"/>
<dbReference type="InParanoid" id="Q9UX98"/>
<dbReference type="PhylomeDB" id="Q9UX98"/>
<dbReference type="Proteomes" id="UP000001974">
    <property type="component" value="Chromosome"/>
</dbReference>
<dbReference type="GO" id="GO:0022627">
    <property type="term" value="C:cytosolic small ribosomal subunit"/>
    <property type="evidence" value="ECO:0000318"/>
    <property type="project" value="GO_Central"/>
</dbReference>
<dbReference type="GO" id="GO:0019843">
    <property type="term" value="F:rRNA binding"/>
    <property type="evidence" value="ECO:0007669"/>
    <property type="project" value="UniProtKB-UniRule"/>
</dbReference>
<dbReference type="GO" id="GO:0003735">
    <property type="term" value="F:structural constituent of ribosome"/>
    <property type="evidence" value="ECO:0000318"/>
    <property type="project" value="GO_Central"/>
</dbReference>
<dbReference type="GO" id="GO:0006412">
    <property type="term" value="P:translation"/>
    <property type="evidence" value="ECO:0007669"/>
    <property type="project" value="UniProtKB-UniRule"/>
</dbReference>
<dbReference type="CDD" id="cd00364">
    <property type="entry name" value="Ribosomal_uS17"/>
    <property type="match status" value="1"/>
</dbReference>
<dbReference type="Gene3D" id="2.40.50.1000">
    <property type="match status" value="1"/>
</dbReference>
<dbReference type="HAMAP" id="MF_01345_A">
    <property type="entry name" value="Ribosomal_uS17_A"/>
    <property type="match status" value="1"/>
</dbReference>
<dbReference type="InterPro" id="IPR012340">
    <property type="entry name" value="NA-bd_OB-fold"/>
</dbReference>
<dbReference type="InterPro" id="IPR000266">
    <property type="entry name" value="Ribosomal_uS17"/>
</dbReference>
<dbReference type="InterPro" id="IPR028333">
    <property type="entry name" value="Ribosomal_uS17_arc/euk"/>
</dbReference>
<dbReference type="InterPro" id="IPR019978">
    <property type="entry name" value="Ribosomal_uS17_archaeal"/>
</dbReference>
<dbReference type="InterPro" id="IPR019979">
    <property type="entry name" value="Ribosomal_uS17_CS"/>
</dbReference>
<dbReference type="NCBIfam" id="NF006345">
    <property type="entry name" value="PRK08572.1"/>
    <property type="match status" value="1"/>
</dbReference>
<dbReference type="NCBIfam" id="TIGR03630">
    <property type="entry name" value="uS17_arch"/>
    <property type="match status" value="1"/>
</dbReference>
<dbReference type="PANTHER" id="PTHR10744">
    <property type="entry name" value="40S RIBOSOMAL PROTEIN S11 FAMILY MEMBER"/>
    <property type="match status" value="1"/>
</dbReference>
<dbReference type="PANTHER" id="PTHR10744:SF9">
    <property type="entry name" value="40S RIBOSOMAL PROTEIN S11-RELATED"/>
    <property type="match status" value="1"/>
</dbReference>
<dbReference type="Pfam" id="PF00366">
    <property type="entry name" value="Ribosomal_S17"/>
    <property type="match status" value="1"/>
</dbReference>
<dbReference type="PRINTS" id="PR00973">
    <property type="entry name" value="RIBOSOMALS17"/>
</dbReference>
<dbReference type="SUPFAM" id="SSF50249">
    <property type="entry name" value="Nucleic acid-binding proteins"/>
    <property type="match status" value="1"/>
</dbReference>
<dbReference type="PROSITE" id="PS00056">
    <property type="entry name" value="RIBOSOMAL_S17"/>
    <property type="match status" value="1"/>
</dbReference>
<evidence type="ECO:0000255" key="1">
    <source>
        <dbReference type="HAMAP-Rule" id="MF_01345"/>
    </source>
</evidence>
<evidence type="ECO:0000305" key="2"/>
<organism>
    <name type="scientific">Saccharolobus solfataricus (strain ATCC 35092 / DSM 1617 / JCM 11322 / P2)</name>
    <name type="common">Sulfolobus solfataricus</name>
    <dbReference type="NCBI Taxonomy" id="273057"/>
    <lineage>
        <taxon>Archaea</taxon>
        <taxon>Thermoproteota</taxon>
        <taxon>Thermoprotei</taxon>
        <taxon>Sulfolobales</taxon>
        <taxon>Sulfolobaceae</taxon>
        <taxon>Saccharolobus</taxon>
    </lineage>
</organism>
<feature type="chain" id="PRO_0000128504" description="Small ribosomal subunit protein uS17">
    <location>
        <begin position="1"/>
        <end position="114"/>
    </location>
</feature>
<proteinExistence type="evidence at protein level"/>
<gene>
    <name evidence="1" type="primary">rps17</name>
    <name evidence="1" type="synonym">rps17Ab</name>
    <name type="ordered locus">SSO0709</name>
    <name type="ORF">C10_021</name>
</gene>
<name>RS17_SACS2</name>
<accession>Q9UX98</accession>
<sequence>MVSKGKTVKDPGIPNITIPEKVCEDEDCPYHGSLRVRGITLEGVIVKYRGTKAAVIERQYLYYDSKYKRYERRRSRIHAHVPPCINVREGDKVIIGECRPLSKSISFVVLGKVS</sequence>
<protein>
    <recommendedName>
        <fullName evidence="1">Small ribosomal subunit protein uS17</fullName>
    </recommendedName>
    <alternativeName>
        <fullName evidence="2">30S ribosomal protein S17</fullName>
    </alternativeName>
</protein>
<reference key="1">
    <citation type="journal article" date="2000" name="Genome">
        <title>Gene content and organization of a 281-kbp contig from the genome of the extremely thermophilic archaeon, Sulfolobus solfataricus P2.</title>
        <authorList>
            <person name="Charlebois R.L."/>
            <person name="Singh R.K."/>
            <person name="Chan-Weiher C.C.-Y."/>
            <person name="Allard G."/>
            <person name="Chow C."/>
            <person name="Confalonieri F."/>
            <person name="Curtis B."/>
            <person name="Duguet M."/>
            <person name="Erauso G."/>
            <person name="Faguy D."/>
            <person name="Gaasterland T."/>
            <person name="Garrett R.A."/>
            <person name="Gordon P."/>
            <person name="Jeffries A.C."/>
            <person name="Kozera C."/>
            <person name="Kushwaha N."/>
            <person name="Lafleur E."/>
            <person name="Medina N."/>
            <person name="Peng X."/>
            <person name="Penny S.L."/>
            <person name="She Q."/>
            <person name="St Jean A."/>
            <person name="van der Oost J."/>
            <person name="Young F."/>
            <person name="Zivanovic Y."/>
            <person name="Doolittle W.F."/>
            <person name="Ragan M.A."/>
            <person name="Sensen C.W."/>
        </authorList>
    </citation>
    <scope>NUCLEOTIDE SEQUENCE [LARGE SCALE GENOMIC DNA]</scope>
    <source>
        <strain>ATCC 35092 / DSM 1617 / JCM 11322 / P2</strain>
    </source>
</reference>
<reference key="2">
    <citation type="journal article" date="2001" name="Proc. Natl. Acad. Sci. U.S.A.">
        <title>The complete genome of the crenarchaeon Sulfolobus solfataricus P2.</title>
        <authorList>
            <person name="She Q."/>
            <person name="Singh R.K."/>
            <person name="Confalonieri F."/>
            <person name="Zivanovic Y."/>
            <person name="Allard G."/>
            <person name="Awayez M.J."/>
            <person name="Chan-Weiher C.C.-Y."/>
            <person name="Clausen I.G."/>
            <person name="Curtis B.A."/>
            <person name="De Moors A."/>
            <person name="Erauso G."/>
            <person name="Fletcher C."/>
            <person name="Gordon P.M.K."/>
            <person name="Heikamp-de Jong I."/>
            <person name="Jeffries A.C."/>
            <person name="Kozera C.J."/>
            <person name="Medina N."/>
            <person name="Peng X."/>
            <person name="Thi-Ngoc H.P."/>
            <person name="Redder P."/>
            <person name="Schenk M.E."/>
            <person name="Theriault C."/>
            <person name="Tolstrup N."/>
            <person name="Charlebois R.L."/>
            <person name="Doolittle W.F."/>
            <person name="Duguet M."/>
            <person name="Gaasterland T."/>
            <person name="Garrett R.A."/>
            <person name="Ragan M.A."/>
            <person name="Sensen C.W."/>
            <person name="Van der Oost J."/>
        </authorList>
    </citation>
    <scope>NUCLEOTIDE SEQUENCE [LARGE SCALE GENOMIC DNA]</scope>
    <source>
        <strain>ATCC 35092 / DSM 1617 / JCM 11322 / P2</strain>
    </source>
</reference>
<comment type="function">
    <text evidence="1">One of the primary rRNA binding proteins, it binds specifically to the 5'-end of 16S ribosomal RNA.</text>
</comment>
<comment type="subunit">
    <text evidence="1">Part of the 30S ribosomal subunit.</text>
</comment>
<comment type="similarity">
    <text evidence="1">Belongs to the universal ribosomal protein uS17 family.</text>
</comment>